<protein>
    <recommendedName>
        <fullName>Probable endoplasmic reticulum-Golgi intermediate compartment protein 3</fullName>
    </recommendedName>
</protein>
<feature type="chain" id="PRO_0000327512" description="Probable endoplasmic reticulum-Golgi intermediate compartment protein 3">
    <location>
        <begin position="1"/>
        <end position="383"/>
    </location>
</feature>
<feature type="topological domain" description="Cytoplasmic" evidence="2">
    <location>
        <begin position="1"/>
        <end position="26"/>
    </location>
</feature>
<feature type="transmembrane region" description="Helical" evidence="2">
    <location>
        <begin position="27"/>
        <end position="47"/>
    </location>
</feature>
<feature type="topological domain" description="Lumenal" evidence="2">
    <location>
        <begin position="48"/>
        <end position="347"/>
    </location>
</feature>
<feature type="transmembrane region" description="Helical" evidence="2">
    <location>
        <begin position="348"/>
        <end position="368"/>
    </location>
</feature>
<feature type="topological domain" description="Cytoplasmic" evidence="2">
    <location>
        <begin position="369"/>
        <end position="383"/>
    </location>
</feature>
<gene>
    <name type="primary">ergic3</name>
    <name type="ORF">DDB_G0292002</name>
</gene>
<accession>Q54DW2</accession>
<dbReference type="EMBL" id="AAFI02000187">
    <property type="protein sequence ID" value="EAL61357.1"/>
    <property type="molecule type" value="Genomic_DNA"/>
</dbReference>
<dbReference type="RefSeq" id="XP_629760.1">
    <property type="nucleotide sequence ID" value="XM_629758.1"/>
</dbReference>
<dbReference type="SMR" id="Q54DW2"/>
<dbReference type="FunCoup" id="Q54DW2">
    <property type="interactions" value="990"/>
</dbReference>
<dbReference type="STRING" id="44689.Q54DW2"/>
<dbReference type="PaxDb" id="44689-DDB0266379"/>
<dbReference type="EnsemblProtists" id="EAL61357">
    <property type="protein sequence ID" value="EAL61357"/>
    <property type="gene ID" value="DDB_G0292002"/>
</dbReference>
<dbReference type="GeneID" id="8628435"/>
<dbReference type="KEGG" id="ddi:DDB_G0292002"/>
<dbReference type="dictyBase" id="DDB_G0292002">
    <property type="gene designation" value="ergic3"/>
</dbReference>
<dbReference type="VEuPathDB" id="AmoebaDB:DDB_G0292002"/>
<dbReference type="eggNOG" id="KOG2667">
    <property type="taxonomic scope" value="Eukaryota"/>
</dbReference>
<dbReference type="HOGENOM" id="CLU_034705_1_0_1"/>
<dbReference type="InParanoid" id="Q54DW2"/>
<dbReference type="OMA" id="QRHEGCR"/>
<dbReference type="PhylomeDB" id="Q54DW2"/>
<dbReference type="PRO" id="PR:Q54DW2"/>
<dbReference type="Proteomes" id="UP000002195">
    <property type="component" value="Chromosome 6"/>
</dbReference>
<dbReference type="GO" id="GO:0030134">
    <property type="term" value="C:COPII-coated ER to Golgi transport vesicle"/>
    <property type="evidence" value="ECO:0000318"/>
    <property type="project" value="GO_Central"/>
</dbReference>
<dbReference type="GO" id="GO:0005783">
    <property type="term" value="C:endoplasmic reticulum"/>
    <property type="evidence" value="ECO:0000318"/>
    <property type="project" value="GO_Central"/>
</dbReference>
<dbReference type="GO" id="GO:0005789">
    <property type="term" value="C:endoplasmic reticulum membrane"/>
    <property type="evidence" value="ECO:0007669"/>
    <property type="project" value="UniProtKB-SubCell"/>
</dbReference>
<dbReference type="GO" id="GO:0033116">
    <property type="term" value="C:endoplasmic reticulum-Golgi intermediate compartment membrane"/>
    <property type="evidence" value="ECO:0007669"/>
    <property type="project" value="UniProtKB-SubCell"/>
</dbReference>
<dbReference type="GO" id="GO:0005794">
    <property type="term" value="C:Golgi apparatus"/>
    <property type="evidence" value="ECO:0007669"/>
    <property type="project" value="UniProtKB-SubCell"/>
</dbReference>
<dbReference type="GO" id="GO:0046907">
    <property type="term" value="P:intracellular transport"/>
    <property type="evidence" value="ECO:0007669"/>
    <property type="project" value="UniProtKB-ARBA"/>
</dbReference>
<dbReference type="GO" id="GO:0016192">
    <property type="term" value="P:vesicle-mediated transport"/>
    <property type="evidence" value="ECO:0007669"/>
    <property type="project" value="UniProtKB-KW"/>
</dbReference>
<dbReference type="InterPro" id="IPR045888">
    <property type="entry name" value="Erv"/>
</dbReference>
<dbReference type="InterPro" id="IPR012936">
    <property type="entry name" value="Erv_C"/>
</dbReference>
<dbReference type="InterPro" id="IPR039542">
    <property type="entry name" value="Erv_N"/>
</dbReference>
<dbReference type="PANTHER" id="PTHR10984">
    <property type="entry name" value="ENDOPLASMIC RETICULUM-GOLGI INTERMEDIATE COMPARTMENT PROTEIN"/>
    <property type="match status" value="1"/>
</dbReference>
<dbReference type="PANTHER" id="PTHR10984:SF25">
    <property type="entry name" value="ENDOPLASMIC RETICULUM-GOLGI INTERMEDIATE COMPARTMENT PROTEIN 3"/>
    <property type="match status" value="1"/>
</dbReference>
<dbReference type="Pfam" id="PF07970">
    <property type="entry name" value="COPIIcoated_ERV"/>
    <property type="match status" value="1"/>
</dbReference>
<dbReference type="Pfam" id="PF13850">
    <property type="entry name" value="ERGIC_N"/>
    <property type="match status" value="1"/>
</dbReference>
<organism>
    <name type="scientific">Dictyostelium discoideum</name>
    <name type="common">Social amoeba</name>
    <dbReference type="NCBI Taxonomy" id="44689"/>
    <lineage>
        <taxon>Eukaryota</taxon>
        <taxon>Amoebozoa</taxon>
        <taxon>Evosea</taxon>
        <taxon>Eumycetozoa</taxon>
        <taxon>Dictyostelia</taxon>
        <taxon>Dictyosteliales</taxon>
        <taxon>Dictyosteliaceae</taxon>
        <taxon>Dictyostelium</taxon>
    </lineage>
</organism>
<name>ERGI3_DICDI</name>
<reference key="1">
    <citation type="journal article" date="2005" name="Nature">
        <title>The genome of the social amoeba Dictyostelium discoideum.</title>
        <authorList>
            <person name="Eichinger L."/>
            <person name="Pachebat J.A."/>
            <person name="Gloeckner G."/>
            <person name="Rajandream M.A."/>
            <person name="Sucgang R."/>
            <person name="Berriman M."/>
            <person name="Song J."/>
            <person name="Olsen R."/>
            <person name="Szafranski K."/>
            <person name="Xu Q."/>
            <person name="Tunggal B."/>
            <person name="Kummerfeld S."/>
            <person name="Madera M."/>
            <person name="Konfortov B.A."/>
            <person name="Rivero F."/>
            <person name="Bankier A.T."/>
            <person name="Lehmann R."/>
            <person name="Hamlin N."/>
            <person name="Davies R."/>
            <person name="Gaudet P."/>
            <person name="Fey P."/>
            <person name="Pilcher K."/>
            <person name="Chen G."/>
            <person name="Saunders D."/>
            <person name="Sodergren E.J."/>
            <person name="Davis P."/>
            <person name="Kerhornou A."/>
            <person name="Nie X."/>
            <person name="Hall N."/>
            <person name="Anjard C."/>
            <person name="Hemphill L."/>
            <person name="Bason N."/>
            <person name="Farbrother P."/>
            <person name="Desany B."/>
            <person name="Just E."/>
            <person name="Morio T."/>
            <person name="Rost R."/>
            <person name="Churcher C.M."/>
            <person name="Cooper J."/>
            <person name="Haydock S."/>
            <person name="van Driessche N."/>
            <person name="Cronin A."/>
            <person name="Goodhead I."/>
            <person name="Muzny D.M."/>
            <person name="Mourier T."/>
            <person name="Pain A."/>
            <person name="Lu M."/>
            <person name="Harper D."/>
            <person name="Lindsay R."/>
            <person name="Hauser H."/>
            <person name="James K.D."/>
            <person name="Quiles M."/>
            <person name="Madan Babu M."/>
            <person name="Saito T."/>
            <person name="Buchrieser C."/>
            <person name="Wardroper A."/>
            <person name="Felder M."/>
            <person name="Thangavelu M."/>
            <person name="Johnson D."/>
            <person name="Knights A."/>
            <person name="Loulseged H."/>
            <person name="Mungall K.L."/>
            <person name="Oliver K."/>
            <person name="Price C."/>
            <person name="Quail M.A."/>
            <person name="Urushihara H."/>
            <person name="Hernandez J."/>
            <person name="Rabbinowitsch E."/>
            <person name="Steffen D."/>
            <person name="Sanders M."/>
            <person name="Ma J."/>
            <person name="Kohara Y."/>
            <person name="Sharp S."/>
            <person name="Simmonds M.N."/>
            <person name="Spiegler S."/>
            <person name="Tivey A."/>
            <person name="Sugano S."/>
            <person name="White B."/>
            <person name="Walker D."/>
            <person name="Woodward J.R."/>
            <person name="Winckler T."/>
            <person name="Tanaka Y."/>
            <person name="Shaulsky G."/>
            <person name="Schleicher M."/>
            <person name="Weinstock G.M."/>
            <person name="Rosenthal A."/>
            <person name="Cox E.C."/>
            <person name="Chisholm R.L."/>
            <person name="Gibbs R.A."/>
            <person name="Loomis W.F."/>
            <person name="Platzer M."/>
            <person name="Kay R.R."/>
            <person name="Williams J.G."/>
            <person name="Dear P.H."/>
            <person name="Noegel A.A."/>
            <person name="Barrell B.G."/>
            <person name="Kuspa A."/>
        </authorList>
    </citation>
    <scope>NUCLEOTIDE SEQUENCE [LARGE SCALE GENOMIC DNA]</scope>
    <source>
        <strain>AX4</strain>
    </source>
</reference>
<evidence type="ECO:0000250" key="1"/>
<evidence type="ECO:0000255" key="2"/>
<evidence type="ECO:0000305" key="3"/>
<proteinExistence type="inferred from homology"/>
<keyword id="KW-0256">Endoplasmic reticulum</keyword>
<keyword id="KW-0931">ER-Golgi transport</keyword>
<keyword id="KW-0333">Golgi apparatus</keyword>
<keyword id="KW-0472">Membrane</keyword>
<keyword id="KW-1185">Reference proteome</keyword>
<keyword id="KW-0812">Transmembrane</keyword>
<keyword id="KW-1133">Transmembrane helix</keyword>
<keyword id="KW-0813">Transport</keyword>
<sequence length="383" mass="42921">MLISQLKKFDAYPKTVDDFRVKTYTGAIVSIIGGVFILWLFFSQVTLYFSTDIHHELFVDTTRGEKLKINMDITFHHLPCAYLSLDAMDVSGEHQFDVAHNIFKKRLSPTGQPIIEAPPIREEEINKKESVKDNNDVVGCGSCYGAEDPSKGIGCCNTCEEVRVAYSKKGWGLDPSGIPQCIREGFTKNLVEQNGEGCQVYGFILVNKVAGNFHFAPGKSFQQHHMHVHDLQPFKDGSFNVSHTINRLSFGNDFPGIKNPLDDVTKTEMVGVGMFQYFVKVVPTIYEGLNGNRIATNQYSVTEHYRLLAKKGEEPSGLPGLFFMYDLSPIMMKVSERGKSFASFLTNVCAIIGGVFTVFGIFDSFIYYSTKNLQKKIDLGKTF</sequence>
<comment type="function">
    <text evidence="1">Possible role in transport between endoplasmic reticulum and Golgi.</text>
</comment>
<comment type="subcellular location">
    <subcellularLocation>
        <location evidence="1">Endoplasmic reticulum-Golgi intermediate compartment membrane</location>
        <topology evidence="1">Multi-pass membrane protein</topology>
    </subcellularLocation>
    <subcellularLocation>
        <location evidence="1">Golgi apparatus</location>
        <location evidence="1">cis-Golgi network membrane</location>
        <topology evidence="1">Multi-pass membrane protein</topology>
    </subcellularLocation>
    <subcellularLocation>
        <location evidence="1">Endoplasmic reticulum membrane</location>
        <topology evidence="1">Multi-pass membrane protein</topology>
    </subcellularLocation>
    <text evidence="1">Cycles between the endoplasmic reticulum and the Golgi.</text>
</comment>
<comment type="similarity">
    <text evidence="3">Belongs to the ERGIC family.</text>
</comment>